<dbReference type="EMBL" id="AB050773">
    <property type="protein sequence ID" value="BAB83035.1"/>
    <property type="molecule type" value="Genomic_DNA"/>
</dbReference>
<dbReference type="EMBL" id="CR456371">
    <property type="protein sequence ID" value="CAG30257.1"/>
    <property type="molecule type" value="mRNA"/>
</dbReference>
<dbReference type="EMBL" id="AP000348">
    <property type="status" value="NOT_ANNOTATED_CDS"/>
    <property type="molecule type" value="Genomic_DNA"/>
</dbReference>
<dbReference type="EMBL" id="AP000349">
    <property type="status" value="NOT_ANNOTATED_CDS"/>
    <property type="molecule type" value="Genomic_DNA"/>
</dbReference>
<dbReference type="CCDS" id="CCDS13814.2">
    <molecule id="Q8WYQ4-1"/>
</dbReference>
<dbReference type="CCDS" id="CCDS93130.1">
    <molecule id="Q8WYQ4-2"/>
</dbReference>
<dbReference type="RefSeq" id="NP_001363832.1">
    <molecule id="Q8WYQ4-2"/>
    <property type="nucleotide sequence ID" value="NM_001376903.1"/>
</dbReference>
<dbReference type="RefSeq" id="NP_872326.2">
    <molecule id="Q8WYQ4-1"/>
    <property type="nucleotide sequence ID" value="NM_182520.3"/>
</dbReference>
<dbReference type="BioGRID" id="127274">
    <property type="interactions" value="168"/>
</dbReference>
<dbReference type="FunCoup" id="Q8WYQ4">
    <property type="interactions" value="3"/>
</dbReference>
<dbReference type="IntAct" id="Q8WYQ4">
    <property type="interactions" value="20"/>
</dbReference>
<dbReference type="STRING" id="9606.ENSP00000305096"/>
<dbReference type="GlyGen" id="Q8WYQ4">
    <property type="glycosylation" value="1 site, 1 N-linked glycan (1 site)"/>
</dbReference>
<dbReference type="BioMuta" id="C22orf15"/>
<dbReference type="DMDM" id="68565600"/>
<dbReference type="MassIVE" id="Q8WYQ4"/>
<dbReference type="PaxDb" id="9606-ENSP00000384965"/>
<dbReference type="PeptideAtlas" id="Q8WYQ4"/>
<dbReference type="ProteomicsDB" id="75186">
    <molecule id="Q8WYQ4-1"/>
</dbReference>
<dbReference type="Antibodypedia" id="9378">
    <property type="antibodies" value="46 antibodies from 7 providers"/>
</dbReference>
<dbReference type="DNASU" id="150248"/>
<dbReference type="Ensembl" id="ENST00000382821.3">
    <molecule id="Q8WYQ4-2"/>
    <property type="protein sequence ID" value="ENSP00000372271.3"/>
    <property type="gene ID" value="ENSG00000169314.15"/>
</dbReference>
<dbReference type="Ensembl" id="ENST00000402217.8">
    <molecule id="Q8WYQ4-1"/>
    <property type="protein sequence ID" value="ENSP00000384965.4"/>
    <property type="gene ID" value="ENSG00000169314.15"/>
</dbReference>
<dbReference type="GeneID" id="150248"/>
<dbReference type="KEGG" id="hsa:150248"/>
<dbReference type="MANE-Select" id="ENST00000402217.8">
    <property type="protein sequence ID" value="ENSP00000384965.4"/>
    <property type="RefSeq nucleotide sequence ID" value="NM_182520.3"/>
    <property type="RefSeq protein sequence ID" value="NP_872326.2"/>
</dbReference>
<dbReference type="UCSC" id="uc002zxu.4">
    <molecule id="Q8WYQ4-1"/>
    <property type="organism name" value="human"/>
</dbReference>
<dbReference type="AGR" id="HGNC:15558"/>
<dbReference type="CTD" id="150248"/>
<dbReference type="GeneCards" id="C22orf15"/>
<dbReference type="HGNC" id="HGNC:15558">
    <property type="gene designation" value="C22orf15"/>
</dbReference>
<dbReference type="HPA" id="ENSG00000169314">
    <property type="expression patterns" value="Tissue enriched (fallopian)"/>
</dbReference>
<dbReference type="neXtProt" id="NX_Q8WYQ4"/>
<dbReference type="OpenTargets" id="ENSG00000169314"/>
<dbReference type="PharmGKB" id="PA134933953"/>
<dbReference type="VEuPathDB" id="HostDB:ENSG00000169314"/>
<dbReference type="eggNOG" id="ENOG502S8RG">
    <property type="taxonomic scope" value="Eukaryota"/>
</dbReference>
<dbReference type="GeneTree" id="ENSGT00390000015147"/>
<dbReference type="HOGENOM" id="CLU_132837_2_0_1"/>
<dbReference type="InParanoid" id="Q8WYQ4"/>
<dbReference type="OMA" id="WRKRMGT"/>
<dbReference type="OrthoDB" id="2109241at2759"/>
<dbReference type="PAN-GO" id="Q8WYQ4">
    <property type="GO annotations" value="0 GO annotations based on evolutionary models"/>
</dbReference>
<dbReference type="PhylomeDB" id="Q8WYQ4"/>
<dbReference type="TreeFam" id="TF328811"/>
<dbReference type="PathwayCommons" id="Q8WYQ4"/>
<dbReference type="SignaLink" id="Q8WYQ4"/>
<dbReference type="BioGRID-ORCS" id="150248">
    <property type="hits" value="7 hits in 1129 CRISPR screens"/>
</dbReference>
<dbReference type="ChiTaRS" id="C22orf15">
    <property type="organism name" value="human"/>
</dbReference>
<dbReference type="GenomeRNAi" id="150248"/>
<dbReference type="Pharos" id="Q8WYQ4">
    <property type="development level" value="Tdark"/>
</dbReference>
<dbReference type="PRO" id="PR:Q8WYQ4"/>
<dbReference type="Proteomes" id="UP000005640">
    <property type="component" value="Chromosome 22"/>
</dbReference>
<dbReference type="RNAct" id="Q8WYQ4">
    <property type="molecule type" value="protein"/>
</dbReference>
<dbReference type="Bgee" id="ENSG00000169314">
    <property type="expression patterns" value="Expressed in right uterine tube and 94 other cell types or tissues"/>
</dbReference>
<dbReference type="ExpressionAtlas" id="Q8WYQ4">
    <property type="expression patterns" value="baseline and differential"/>
</dbReference>
<dbReference type="InterPro" id="IPR039471">
    <property type="entry name" value="CXorf65-like"/>
</dbReference>
<dbReference type="PANTHER" id="PTHR33887:SF1">
    <property type="entry name" value="GENE 867-RELATED"/>
    <property type="match status" value="1"/>
</dbReference>
<dbReference type="PANTHER" id="PTHR33887">
    <property type="entry name" value="PB1 DOMAIN-CONTAINING PROTEIN"/>
    <property type="match status" value="1"/>
</dbReference>
<dbReference type="Pfam" id="PF15874">
    <property type="entry name" value="Il2rg"/>
    <property type="match status" value="1"/>
</dbReference>
<comment type="interaction">
    <interactant intactId="EBI-12030460">
        <id>Q8WYQ4-2</id>
    </interactant>
    <interactant intactId="EBI-11743294">
        <id>Q8IZP0-5</id>
        <label>ABI1</label>
    </interactant>
    <organismsDiffer>false</organismsDiffer>
    <experiments>3</experiments>
</comment>
<comment type="interaction">
    <interactant intactId="EBI-12030460">
        <id>Q8WYQ4-2</id>
    </interactant>
    <interactant intactId="EBI-11524452">
        <id>Q8N9N5-2</id>
        <label>BANP</label>
    </interactant>
    <organismsDiffer>false</organismsDiffer>
    <experiments>3</experiments>
</comment>
<comment type="interaction">
    <interactant intactId="EBI-12030460">
        <id>Q8WYQ4-2</id>
    </interactant>
    <interactant intactId="EBI-11977221">
        <id>Q86Z20</id>
        <label>CCDC125</label>
    </interactant>
    <organismsDiffer>false</organismsDiffer>
    <experiments>3</experiments>
</comment>
<comment type="interaction">
    <interactant intactId="EBI-12030460">
        <id>Q8WYQ4-2</id>
    </interactant>
    <interactant intactId="EBI-10242151">
        <id>Q53EP0-3</id>
        <label>FNDC3B</label>
    </interactant>
    <organismsDiffer>false</organismsDiffer>
    <experiments>3</experiments>
</comment>
<comment type="interaction">
    <interactant intactId="EBI-12030460">
        <id>Q8WYQ4-2</id>
    </interactant>
    <interactant intactId="EBI-5916454">
        <id>A6NEM1</id>
        <label>GOLGA6L9</label>
    </interactant>
    <organismsDiffer>false</organismsDiffer>
    <experiments>3</experiments>
</comment>
<comment type="interaction">
    <interactant intactId="EBI-12030460">
        <id>Q8WYQ4-2</id>
    </interactant>
    <interactant intactId="EBI-355106">
        <id>P17066</id>
        <label>HSPA6</label>
    </interactant>
    <organismsDiffer>false</organismsDiffer>
    <experiments>3</experiments>
</comment>
<comment type="interaction">
    <interactant intactId="EBI-12030460">
        <id>Q8WYQ4-2</id>
    </interactant>
    <interactant intactId="EBI-739361">
        <id>Q9UBY9</id>
        <label>HSPB7</label>
    </interactant>
    <organismsDiffer>false</organismsDiffer>
    <experiments>6</experiments>
</comment>
<comment type="interaction">
    <interactant intactId="EBI-12030460">
        <id>Q8WYQ4-2</id>
    </interactant>
    <interactant intactId="EBI-11976683">
        <id>Q4G0X4</id>
        <label>KCTD21</label>
    </interactant>
    <organismsDiffer>false</organismsDiffer>
    <experiments>3</experiments>
</comment>
<comment type="interaction">
    <interactant intactId="EBI-12030460">
        <id>Q8WYQ4-2</id>
    </interactant>
    <interactant intactId="EBI-444403">
        <id>P53667</id>
        <label>LIMK1</label>
    </interactant>
    <organismsDiffer>false</organismsDiffer>
    <experiments>3</experiments>
</comment>
<comment type="interaction">
    <interactant intactId="EBI-12030460">
        <id>Q8WYQ4-2</id>
    </interactant>
    <interactant intactId="EBI-347928">
        <id>P62487</id>
        <label>POLR2G</label>
    </interactant>
    <organismsDiffer>false</organismsDiffer>
    <experiments>3</experiments>
</comment>
<comment type="interaction">
    <interactant intactId="EBI-12030460">
        <id>Q8WYQ4-2</id>
    </interactant>
    <interactant intactId="EBI-355744">
        <id>Q12933</id>
        <label>TRAF2</label>
    </interactant>
    <organismsDiffer>false</organismsDiffer>
    <experiments>3</experiments>
</comment>
<comment type="interaction">
    <interactant intactId="EBI-12030460">
        <id>Q8WYQ4-2</id>
    </interactant>
    <interactant intactId="EBI-7254550">
        <id>P36508</id>
        <label>ZNF76</label>
    </interactant>
    <organismsDiffer>false</organismsDiffer>
    <experiments>3</experiments>
</comment>
<comment type="alternative products">
    <event type="alternative splicing"/>
    <isoform>
        <id>Q8WYQ4-1</id>
        <name>1</name>
        <sequence type="displayed"/>
    </isoform>
    <isoform>
        <id>Q8WYQ4-2</id>
        <name>2</name>
        <sequence type="described" ref="VSP_014462 VSP_014463"/>
    </isoform>
</comment>
<accession>Q8WYQ4</accession>
<accession>Q6ICJ7</accession>
<name>CV015_HUMAN</name>
<keyword id="KW-0025">Alternative splicing</keyword>
<keyword id="KW-1267">Proteomics identification</keyword>
<keyword id="KW-1185">Reference proteome</keyword>
<protein>
    <recommendedName>
        <fullName>Uncharacterized protein C22orf15</fullName>
    </recommendedName>
    <alternativeName>
        <fullName>Protein N27C7-3</fullName>
    </alternativeName>
</protein>
<evidence type="ECO:0000256" key="1">
    <source>
        <dbReference type="SAM" id="MobiDB-lite"/>
    </source>
</evidence>
<evidence type="ECO:0000303" key="2">
    <source>
    </source>
</evidence>
<gene>
    <name type="primary">C22orf15</name>
</gene>
<proteinExistence type="evidence at protein level"/>
<sequence length="148" mass="16487">MFIKVMFGAGCSVLVNTSCRLVNLTAHLRQKAGLPPDATIALLAEDGNLVSLEEDLKEGASRAQTMGNSLLKERAIYVLVRIIKGEDMASTRYESLLENLDDHYPELAEELRRLSGLSSVGHNWRKRMGTRRGRHEQSPTSRPRKGPD</sequence>
<reference key="1">
    <citation type="submission" date="2000-11" db="EMBL/GenBank/DDBJ databases">
        <title>Molecular cloning of N27C7-3 gene.</title>
        <authorList>
            <person name="Shimizu N."/>
            <person name="Minosima S."/>
            <person name="Kawasaki K."/>
            <person name="Sasaki T."/>
            <person name="Hosono K."/>
        </authorList>
    </citation>
    <scope>NUCLEOTIDE SEQUENCE [GENOMIC DNA] (ISOFORM 1)</scope>
</reference>
<reference key="2">
    <citation type="journal article" date="2004" name="Genome Biol.">
        <title>A genome annotation-driven approach to cloning the human ORFeome.</title>
        <authorList>
            <person name="Collins J.E."/>
            <person name="Wright C.L."/>
            <person name="Edwards C.A."/>
            <person name="Davis M.P."/>
            <person name="Grinham J.A."/>
            <person name="Cole C.G."/>
            <person name="Goward M.E."/>
            <person name="Aguado B."/>
            <person name="Mallya M."/>
            <person name="Mokrab Y."/>
            <person name="Huckle E.J."/>
            <person name="Beare D.M."/>
            <person name="Dunham I."/>
        </authorList>
    </citation>
    <scope>NUCLEOTIDE SEQUENCE [LARGE SCALE MRNA] (ISOFORM 2)</scope>
</reference>
<reference key="3">
    <citation type="journal article" date="1999" name="Nature">
        <title>The DNA sequence of human chromosome 22.</title>
        <authorList>
            <person name="Dunham I."/>
            <person name="Hunt A.R."/>
            <person name="Collins J.E."/>
            <person name="Bruskiewich R."/>
            <person name="Beare D.M."/>
            <person name="Clamp M."/>
            <person name="Smink L.J."/>
            <person name="Ainscough R."/>
            <person name="Almeida J.P."/>
            <person name="Babbage A.K."/>
            <person name="Bagguley C."/>
            <person name="Bailey J."/>
            <person name="Barlow K.F."/>
            <person name="Bates K.N."/>
            <person name="Beasley O.P."/>
            <person name="Bird C.P."/>
            <person name="Blakey S.E."/>
            <person name="Bridgeman A.M."/>
            <person name="Buck D."/>
            <person name="Burgess J."/>
            <person name="Burrill W.D."/>
            <person name="Burton J."/>
            <person name="Carder C."/>
            <person name="Carter N.P."/>
            <person name="Chen Y."/>
            <person name="Clark G."/>
            <person name="Clegg S.M."/>
            <person name="Cobley V.E."/>
            <person name="Cole C.G."/>
            <person name="Collier R.E."/>
            <person name="Connor R."/>
            <person name="Conroy D."/>
            <person name="Corby N.R."/>
            <person name="Coville G.J."/>
            <person name="Cox A.V."/>
            <person name="Davis J."/>
            <person name="Dawson E."/>
            <person name="Dhami P.D."/>
            <person name="Dockree C."/>
            <person name="Dodsworth S.J."/>
            <person name="Durbin R.M."/>
            <person name="Ellington A.G."/>
            <person name="Evans K.L."/>
            <person name="Fey J.M."/>
            <person name="Fleming K."/>
            <person name="French L."/>
            <person name="Garner A.A."/>
            <person name="Gilbert J.G.R."/>
            <person name="Goward M.E."/>
            <person name="Grafham D.V."/>
            <person name="Griffiths M.N.D."/>
            <person name="Hall C."/>
            <person name="Hall R.E."/>
            <person name="Hall-Tamlyn G."/>
            <person name="Heathcott R.W."/>
            <person name="Ho S."/>
            <person name="Holmes S."/>
            <person name="Hunt S.E."/>
            <person name="Jones M.C."/>
            <person name="Kershaw J."/>
            <person name="Kimberley A.M."/>
            <person name="King A."/>
            <person name="Laird G.K."/>
            <person name="Langford C.F."/>
            <person name="Leversha M.A."/>
            <person name="Lloyd C."/>
            <person name="Lloyd D.M."/>
            <person name="Martyn I.D."/>
            <person name="Mashreghi-Mohammadi M."/>
            <person name="Matthews L.H."/>
            <person name="Mccann O.T."/>
            <person name="Mcclay J."/>
            <person name="Mclaren S."/>
            <person name="McMurray A.A."/>
            <person name="Milne S.A."/>
            <person name="Mortimore B.J."/>
            <person name="Odell C.N."/>
            <person name="Pavitt R."/>
            <person name="Pearce A.V."/>
            <person name="Pearson D."/>
            <person name="Phillimore B.J.C.T."/>
            <person name="Phillips S.H."/>
            <person name="Plumb R.W."/>
            <person name="Ramsay H."/>
            <person name="Ramsey Y."/>
            <person name="Rogers L."/>
            <person name="Ross M.T."/>
            <person name="Scott C.E."/>
            <person name="Sehra H.K."/>
            <person name="Skuce C.D."/>
            <person name="Smalley S."/>
            <person name="Smith M.L."/>
            <person name="Soderlund C."/>
            <person name="Spragon L."/>
            <person name="Steward C.A."/>
            <person name="Sulston J.E."/>
            <person name="Swann R.M."/>
            <person name="Vaudin M."/>
            <person name="Wall M."/>
            <person name="Wallis J.M."/>
            <person name="Whiteley M.N."/>
            <person name="Willey D.L."/>
            <person name="Williams L."/>
            <person name="Williams S.A."/>
            <person name="Williamson H."/>
            <person name="Wilmer T.E."/>
            <person name="Wilming L."/>
            <person name="Wright C.L."/>
            <person name="Hubbard T."/>
            <person name="Bentley D.R."/>
            <person name="Beck S."/>
            <person name="Rogers J."/>
            <person name="Shimizu N."/>
            <person name="Minoshima S."/>
            <person name="Kawasaki K."/>
            <person name="Sasaki T."/>
            <person name="Asakawa S."/>
            <person name="Kudoh J."/>
            <person name="Shintani A."/>
            <person name="Shibuya K."/>
            <person name="Yoshizaki Y."/>
            <person name="Aoki N."/>
            <person name="Mitsuyama S."/>
            <person name="Roe B.A."/>
            <person name="Chen F."/>
            <person name="Chu L."/>
            <person name="Crabtree J."/>
            <person name="Deschamps S."/>
            <person name="Do A."/>
            <person name="Do T."/>
            <person name="Dorman A."/>
            <person name="Fang F."/>
            <person name="Fu Y."/>
            <person name="Hu P."/>
            <person name="Hua A."/>
            <person name="Kenton S."/>
            <person name="Lai H."/>
            <person name="Lao H.I."/>
            <person name="Lewis J."/>
            <person name="Lewis S."/>
            <person name="Lin S.-P."/>
            <person name="Loh P."/>
            <person name="Malaj E."/>
            <person name="Nguyen T."/>
            <person name="Pan H."/>
            <person name="Phan S."/>
            <person name="Qi S."/>
            <person name="Qian Y."/>
            <person name="Ray L."/>
            <person name="Ren Q."/>
            <person name="Shaull S."/>
            <person name="Sloan D."/>
            <person name="Song L."/>
            <person name="Wang Q."/>
            <person name="Wang Y."/>
            <person name="Wang Z."/>
            <person name="White J."/>
            <person name="Willingham D."/>
            <person name="Wu H."/>
            <person name="Yao Z."/>
            <person name="Zhan M."/>
            <person name="Zhang G."/>
            <person name="Chissoe S."/>
            <person name="Murray J."/>
            <person name="Miller N."/>
            <person name="Minx P."/>
            <person name="Fulton R."/>
            <person name="Johnson D."/>
            <person name="Bemis G."/>
            <person name="Bentley D."/>
            <person name="Bradshaw H."/>
            <person name="Bourne S."/>
            <person name="Cordes M."/>
            <person name="Du Z."/>
            <person name="Fulton L."/>
            <person name="Goela D."/>
            <person name="Graves T."/>
            <person name="Hawkins J."/>
            <person name="Hinds K."/>
            <person name="Kemp K."/>
            <person name="Latreille P."/>
            <person name="Layman D."/>
            <person name="Ozersky P."/>
            <person name="Rohlfing T."/>
            <person name="Scheet P."/>
            <person name="Walker C."/>
            <person name="Wamsley A."/>
            <person name="Wohldmann P."/>
            <person name="Pepin K."/>
            <person name="Nelson J."/>
            <person name="Korf I."/>
            <person name="Bedell J.A."/>
            <person name="Hillier L.W."/>
            <person name="Mardis E."/>
            <person name="Waterston R."/>
            <person name="Wilson R."/>
            <person name="Emanuel B.S."/>
            <person name="Shaikh T."/>
            <person name="Kurahashi H."/>
            <person name="Saitta S."/>
            <person name="Budarf M.L."/>
            <person name="McDermid H.E."/>
            <person name="Johnson A."/>
            <person name="Wong A.C.C."/>
            <person name="Morrow B.E."/>
            <person name="Edelmann L."/>
            <person name="Kim U.J."/>
            <person name="Shizuya H."/>
            <person name="Simon M.I."/>
            <person name="Dumanski J.P."/>
            <person name="Peyrard M."/>
            <person name="Kedra D."/>
            <person name="Seroussi E."/>
            <person name="Fransson I."/>
            <person name="Tapia I."/>
            <person name="Bruder C.E."/>
            <person name="O'Brien K.P."/>
            <person name="Wilkinson P."/>
            <person name="Bodenteich A."/>
            <person name="Hartman K."/>
            <person name="Hu X."/>
            <person name="Khan A.S."/>
            <person name="Lane L."/>
            <person name="Tilahun Y."/>
            <person name="Wright H."/>
        </authorList>
    </citation>
    <scope>NUCLEOTIDE SEQUENCE [LARGE SCALE GENOMIC DNA]</scope>
</reference>
<organism>
    <name type="scientific">Homo sapiens</name>
    <name type="common">Human</name>
    <dbReference type="NCBI Taxonomy" id="9606"/>
    <lineage>
        <taxon>Eukaryota</taxon>
        <taxon>Metazoa</taxon>
        <taxon>Chordata</taxon>
        <taxon>Craniata</taxon>
        <taxon>Vertebrata</taxon>
        <taxon>Euteleostomi</taxon>
        <taxon>Mammalia</taxon>
        <taxon>Eutheria</taxon>
        <taxon>Euarchontoglires</taxon>
        <taxon>Primates</taxon>
        <taxon>Haplorrhini</taxon>
        <taxon>Catarrhini</taxon>
        <taxon>Hominidae</taxon>
        <taxon>Homo</taxon>
    </lineage>
</organism>
<feature type="chain" id="PRO_0000079576" description="Uncharacterized protein C22orf15">
    <location>
        <begin position="1"/>
        <end position="148"/>
    </location>
</feature>
<feature type="region of interest" description="Disordered" evidence="1">
    <location>
        <begin position="122"/>
        <end position="148"/>
    </location>
</feature>
<feature type="compositionally biased region" description="Basic residues" evidence="1">
    <location>
        <begin position="123"/>
        <end position="134"/>
    </location>
</feature>
<feature type="splice variant" id="VSP_014462" description="In isoform 2." evidence="2">
    <original>K</original>
    <variation>SKVAQE</variation>
    <location>
        <position position="84"/>
    </location>
</feature>
<feature type="splice variant" id="VSP_014463" description="In isoform 2." evidence="2">
    <original>EELRRLSGLSSVGHNWRKRMGTRRGRHEQSPTSRPRKGPD</original>
    <variation>GANRQQPSRTPLAESGIAEKLHQQEGQGP</variation>
    <location>
        <begin position="109"/>
        <end position="148"/>
    </location>
</feature>